<organism>
    <name type="scientific">Streptococcus suis (strain 05ZYH33)</name>
    <dbReference type="NCBI Taxonomy" id="391295"/>
    <lineage>
        <taxon>Bacteria</taxon>
        <taxon>Bacillati</taxon>
        <taxon>Bacillota</taxon>
        <taxon>Bacilli</taxon>
        <taxon>Lactobacillales</taxon>
        <taxon>Streptococcaceae</taxon>
        <taxon>Streptococcus</taxon>
    </lineage>
</organism>
<proteinExistence type="inferred from homology"/>
<feature type="chain" id="PRO_1000069988" description="Segregation and condensation protein A">
    <location>
        <begin position="1"/>
        <end position="239"/>
    </location>
</feature>
<keyword id="KW-0131">Cell cycle</keyword>
<keyword id="KW-0132">Cell division</keyword>
<keyword id="KW-0159">Chromosome partition</keyword>
<keyword id="KW-0963">Cytoplasm</keyword>
<sequence>MDIKLKDFEGPLDLLLHLVSKYQVDIYEVPITEVIEQYLAYIATLQAMRLEVAGEYMLMASQLMVIKSRRLLPKVVEQIDPEDDPEMDLLDQLEEYRKFKLLSEKLGEQHDERANYFSKPKLDLIYDDVQLAKDKTVIDIFLAFSKVMAEKQASLRQSHATIARDEYKIEDMMDFVRSRFETGPRLELRQLFQESQDVNEMITIFLATLELVKVHEIVLEQTETFGDIYLVRSEDESLS</sequence>
<evidence type="ECO:0000255" key="1">
    <source>
        <dbReference type="HAMAP-Rule" id="MF_01805"/>
    </source>
</evidence>
<accession>A4VX28</accession>
<reference key="1">
    <citation type="journal article" date="2007" name="PLoS ONE">
        <title>A glimpse of streptococcal toxic shock syndrome from comparative genomics of S. suis 2 Chinese isolates.</title>
        <authorList>
            <person name="Chen C."/>
            <person name="Tang J."/>
            <person name="Dong W."/>
            <person name="Wang C."/>
            <person name="Feng Y."/>
            <person name="Wang J."/>
            <person name="Zheng F."/>
            <person name="Pan X."/>
            <person name="Liu D."/>
            <person name="Li M."/>
            <person name="Song Y."/>
            <person name="Zhu X."/>
            <person name="Sun H."/>
            <person name="Feng T."/>
            <person name="Guo Z."/>
            <person name="Ju A."/>
            <person name="Ge J."/>
            <person name="Dong Y."/>
            <person name="Sun W."/>
            <person name="Jiang Y."/>
            <person name="Wang J."/>
            <person name="Yan J."/>
            <person name="Yang H."/>
            <person name="Wang X."/>
            <person name="Gao G.F."/>
            <person name="Yang R."/>
            <person name="Wang J."/>
            <person name="Yu J."/>
        </authorList>
    </citation>
    <scope>NUCLEOTIDE SEQUENCE [LARGE SCALE GENOMIC DNA]</scope>
    <source>
        <strain>05ZYH33</strain>
    </source>
</reference>
<dbReference type="EMBL" id="CP000407">
    <property type="protein sequence ID" value="ABP90667.1"/>
    <property type="molecule type" value="Genomic_DNA"/>
</dbReference>
<dbReference type="SMR" id="A4VX28"/>
<dbReference type="STRING" id="391295.SSU05_1701"/>
<dbReference type="KEGG" id="ssu:SSU05_1701"/>
<dbReference type="eggNOG" id="COG1354">
    <property type="taxonomic scope" value="Bacteria"/>
</dbReference>
<dbReference type="HOGENOM" id="CLU_038686_3_3_9"/>
<dbReference type="GO" id="GO:0005737">
    <property type="term" value="C:cytoplasm"/>
    <property type="evidence" value="ECO:0007669"/>
    <property type="project" value="UniProtKB-SubCell"/>
</dbReference>
<dbReference type="GO" id="GO:0051301">
    <property type="term" value="P:cell division"/>
    <property type="evidence" value="ECO:0007669"/>
    <property type="project" value="UniProtKB-KW"/>
</dbReference>
<dbReference type="GO" id="GO:0007059">
    <property type="term" value="P:chromosome segregation"/>
    <property type="evidence" value="ECO:0007669"/>
    <property type="project" value="UniProtKB-UniRule"/>
</dbReference>
<dbReference type="GO" id="GO:0006260">
    <property type="term" value="P:DNA replication"/>
    <property type="evidence" value="ECO:0007669"/>
    <property type="project" value="UniProtKB-UniRule"/>
</dbReference>
<dbReference type="Gene3D" id="6.10.250.2410">
    <property type="match status" value="1"/>
</dbReference>
<dbReference type="Gene3D" id="1.10.10.580">
    <property type="entry name" value="Structural maintenance of chromosome 1. Chain E"/>
    <property type="match status" value="1"/>
</dbReference>
<dbReference type="HAMAP" id="MF_01805">
    <property type="entry name" value="ScpA"/>
    <property type="match status" value="1"/>
</dbReference>
<dbReference type="InterPro" id="IPR003768">
    <property type="entry name" value="ScpA"/>
</dbReference>
<dbReference type="InterPro" id="IPR023093">
    <property type="entry name" value="ScpA-like_C"/>
</dbReference>
<dbReference type="NCBIfam" id="NF000993">
    <property type="entry name" value="PRK00104.1-2"/>
    <property type="match status" value="1"/>
</dbReference>
<dbReference type="PANTHER" id="PTHR33969">
    <property type="entry name" value="SEGREGATION AND CONDENSATION PROTEIN A"/>
    <property type="match status" value="1"/>
</dbReference>
<dbReference type="PANTHER" id="PTHR33969:SF2">
    <property type="entry name" value="SEGREGATION AND CONDENSATION PROTEIN A"/>
    <property type="match status" value="1"/>
</dbReference>
<dbReference type="Pfam" id="PF02616">
    <property type="entry name" value="SMC_ScpA"/>
    <property type="match status" value="1"/>
</dbReference>
<name>SCPA_STRSY</name>
<protein>
    <recommendedName>
        <fullName evidence="1">Segregation and condensation protein A</fullName>
    </recommendedName>
</protein>
<comment type="function">
    <text evidence="1">Participates in chromosomal partition during cell division. May act via the formation of a condensin-like complex containing Smc and ScpB that pull DNA away from mid-cell into both cell halves.</text>
</comment>
<comment type="subunit">
    <text evidence="1">Component of a cohesin-like complex composed of ScpA, ScpB and the Smc homodimer, in which ScpA and ScpB bind to the head domain of Smc. The presence of the three proteins is required for the association of the complex with DNA.</text>
</comment>
<comment type="subcellular location">
    <subcellularLocation>
        <location evidence="1">Cytoplasm</location>
    </subcellularLocation>
    <text evidence="1">Associated with two foci at the outer edges of the nucleoid region in young cells, and at four foci within both cell halves in older cells.</text>
</comment>
<comment type="similarity">
    <text evidence="1">Belongs to the ScpA family.</text>
</comment>
<gene>
    <name evidence="1" type="primary">scpA</name>
    <name type="ordered locus">SSU05_1701</name>
</gene>